<accession>Q9SQN9</accession>
<dbReference type="EMBL" id="AC010793">
    <property type="protein sequence ID" value="AAF68112.1"/>
    <property type="molecule type" value="Genomic_DNA"/>
</dbReference>
<dbReference type="EMBL" id="AC011717">
    <property type="protein sequence ID" value="AAG52257.1"/>
    <property type="molecule type" value="Genomic_DNA"/>
</dbReference>
<dbReference type="EMBL" id="CP002684">
    <property type="protein sequence ID" value="AEE36300.1"/>
    <property type="molecule type" value="Genomic_DNA"/>
</dbReference>
<dbReference type="EMBL" id="DQ056519">
    <property type="protein sequence ID" value="AAY78675.1"/>
    <property type="molecule type" value="mRNA"/>
</dbReference>
<dbReference type="PIR" id="H96828">
    <property type="entry name" value="H96828"/>
</dbReference>
<dbReference type="RefSeq" id="NP_178098.1">
    <property type="nucleotide sequence ID" value="NM_106629.2"/>
</dbReference>
<dbReference type="SMR" id="Q9SQN9"/>
<dbReference type="GlyGen" id="Q9SQN9">
    <property type="glycosylation" value="3 sites"/>
</dbReference>
<dbReference type="PaxDb" id="3702-AT1G79800.1"/>
<dbReference type="ProteomicsDB" id="174915"/>
<dbReference type="EnsemblPlants" id="AT1G79800.1">
    <property type="protein sequence ID" value="AT1G79800.1"/>
    <property type="gene ID" value="AT1G79800"/>
</dbReference>
<dbReference type="GeneID" id="844319"/>
<dbReference type="Gramene" id="AT1G79800.1">
    <property type="protein sequence ID" value="AT1G79800.1"/>
    <property type="gene ID" value="AT1G79800"/>
</dbReference>
<dbReference type="KEGG" id="ath:AT1G79800"/>
<dbReference type="Araport" id="AT1G79800"/>
<dbReference type="TAIR" id="AT1G79800">
    <property type="gene designation" value="ENODL7"/>
</dbReference>
<dbReference type="eggNOG" id="ENOG502S0M1">
    <property type="taxonomic scope" value="Eukaryota"/>
</dbReference>
<dbReference type="HOGENOM" id="CLU_058719_1_3_1"/>
<dbReference type="InParanoid" id="Q9SQN9"/>
<dbReference type="OMA" id="VYSHWAS"/>
<dbReference type="PRO" id="PR:Q9SQN9"/>
<dbReference type="Proteomes" id="UP000006548">
    <property type="component" value="Chromosome 1"/>
</dbReference>
<dbReference type="ExpressionAtlas" id="Q9SQN9">
    <property type="expression patterns" value="baseline and differential"/>
</dbReference>
<dbReference type="GO" id="GO:0005886">
    <property type="term" value="C:plasma membrane"/>
    <property type="evidence" value="ECO:0007669"/>
    <property type="project" value="UniProtKB-SubCell"/>
</dbReference>
<dbReference type="GO" id="GO:0098552">
    <property type="term" value="C:side of membrane"/>
    <property type="evidence" value="ECO:0007669"/>
    <property type="project" value="UniProtKB-KW"/>
</dbReference>
<dbReference type="GO" id="GO:0009055">
    <property type="term" value="F:electron transfer activity"/>
    <property type="evidence" value="ECO:0007669"/>
    <property type="project" value="InterPro"/>
</dbReference>
<dbReference type="CDD" id="cd11019">
    <property type="entry name" value="OsENODL1_like"/>
    <property type="match status" value="1"/>
</dbReference>
<dbReference type="FunFam" id="2.60.40.420:FF:000010">
    <property type="entry name" value="Early nodulin-like protein 1"/>
    <property type="match status" value="1"/>
</dbReference>
<dbReference type="Gene3D" id="2.60.40.420">
    <property type="entry name" value="Cupredoxins - blue copper proteins"/>
    <property type="match status" value="1"/>
</dbReference>
<dbReference type="InterPro" id="IPR008972">
    <property type="entry name" value="Cupredoxin"/>
</dbReference>
<dbReference type="InterPro" id="IPR041846">
    <property type="entry name" value="ENL_dom"/>
</dbReference>
<dbReference type="InterPro" id="IPR039391">
    <property type="entry name" value="Phytocyanin-like"/>
</dbReference>
<dbReference type="InterPro" id="IPR003245">
    <property type="entry name" value="Phytocyanin_dom"/>
</dbReference>
<dbReference type="PANTHER" id="PTHR33021">
    <property type="entry name" value="BLUE COPPER PROTEIN"/>
    <property type="match status" value="1"/>
</dbReference>
<dbReference type="PANTHER" id="PTHR33021:SF234">
    <property type="entry name" value="EARLY NODULIN-LIKE PROTEIN 7"/>
    <property type="match status" value="1"/>
</dbReference>
<dbReference type="Pfam" id="PF02298">
    <property type="entry name" value="Cu_bind_like"/>
    <property type="match status" value="1"/>
</dbReference>
<dbReference type="SUPFAM" id="SSF49503">
    <property type="entry name" value="Cupredoxins"/>
    <property type="match status" value="1"/>
</dbReference>
<dbReference type="PROSITE" id="PS51485">
    <property type="entry name" value="PHYTOCYANIN"/>
    <property type="match status" value="1"/>
</dbReference>
<reference key="1">
    <citation type="journal article" date="2000" name="Nature">
        <title>Sequence and analysis of chromosome 1 of the plant Arabidopsis thaliana.</title>
        <authorList>
            <person name="Theologis A."/>
            <person name="Ecker J.R."/>
            <person name="Palm C.J."/>
            <person name="Federspiel N.A."/>
            <person name="Kaul S."/>
            <person name="White O."/>
            <person name="Alonso J."/>
            <person name="Altafi H."/>
            <person name="Araujo R."/>
            <person name="Bowman C.L."/>
            <person name="Brooks S.Y."/>
            <person name="Buehler E."/>
            <person name="Chan A."/>
            <person name="Chao Q."/>
            <person name="Chen H."/>
            <person name="Cheuk R.F."/>
            <person name="Chin C.W."/>
            <person name="Chung M.K."/>
            <person name="Conn L."/>
            <person name="Conway A.B."/>
            <person name="Conway A.R."/>
            <person name="Creasy T.H."/>
            <person name="Dewar K."/>
            <person name="Dunn P."/>
            <person name="Etgu P."/>
            <person name="Feldblyum T.V."/>
            <person name="Feng J.-D."/>
            <person name="Fong B."/>
            <person name="Fujii C.Y."/>
            <person name="Gill J.E."/>
            <person name="Goldsmith A.D."/>
            <person name="Haas B."/>
            <person name="Hansen N.F."/>
            <person name="Hughes B."/>
            <person name="Huizar L."/>
            <person name="Hunter J.L."/>
            <person name="Jenkins J."/>
            <person name="Johnson-Hopson C."/>
            <person name="Khan S."/>
            <person name="Khaykin E."/>
            <person name="Kim C.J."/>
            <person name="Koo H.L."/>
            <person name="Kremenetskaia I."/>
            <person name="Kurtz D.B."/>
            <person name="Kwan A."/>
            <person name="Lam B."/>
            <person name="Langin-Hooper S."/>
            <person name="Lee A."/>
            <person name="Lee J.M."/>
            <person name="Lenz C.A."/>
            <person name="Li J.H."/>
            <person name="Li Y.-P."/>
            <person name="Lin X."/>
            <person name="Liu S.X."/>
            <person name="Liu Z.A."/>
            <person name="Luros J.S."/>
            <person name="Maiti R."/>
            <person name="Marziali A."/>
            <person name="Militscher J."/>
            <person name="Miranda M."/>
            <person name="Nguyen M."/>
            <person name="Nierman W.C."/>
            <person name="Osborne B.I."/>
            <person name="Pai G."/>
            <person name="Peterson J."/>
            <person name="Pham P.K."/>
            <person name="Rizzo M."/>
            <person name="Rooney T."/>
            <person name="Rowley D."/>
            <person name="Sakano H."/>
            <person name="Salzberg S.L."/>
            <person name="Schwartz J.R."/>
            <person name="Shinn P."/>
            <person name="Southwick A.M."/>
            <person name="Sun H."/>
            <person name="Tallon L.J."/>
            <person name="Tambunga G."/>
            <person name="Toriumi M.J."/>
            <person name="Town C.D."/>
            <person name="Utterback T."/>
            <person name="Van Aken S."/>
            <person name="Vaysberg M."/>
            <person name="Vysotskaia V.S."/>
            <person name="Walker M."/>
            <person name="Wu D."/>
            <person name="Yu G."/>
            <person name="Fraser C.M."/>
            <person name="Venter J.C."/>
            <person name="Davis R.W."/>
        </authorList>
    </citation>
    <scope>NUCLEOTIDE SEQUENCE [LARGE SCALE GENOMIC DNA]</scope>
    <source>
        <strain>cv. Columbia</strain>
    </source>
</reference>
<reference key="2">
    <citation type="journal article" date="2017" name="Plant J.">
        <title>Araport11: a complete reannotation of the Arabidopsis thaliana reference genome.</title>
        <authorList>
            <person name="Cheng C.Y."/>
            <person name="Krishnakumar V."/>
            <person name="Chan A.P."/>
            <person name="Thibaud-Nissen F."/>
            <person name="Schobel S."/>
            <person name="Town C.D."/>
        </authorList>
    </citation>
    <scope>GENOME REANNOTATION</scope>
    <source>
        <strain>cv. Columbia</strain>
    </source>
</reference>
<reference key="3">
    <citation type="journal article" date="2006" name="Plant Biotechnol. J.">
        <title>Simultaneous high-throughput recombinational cloning of open reading frames in closed and open configurations.</title>
        <authorList>
            <person name="Underwood B.A."/>
            <person name="Vanderhaeghen R."/>
            <person name="Whitford R."/>
            <person name="Town C.D."/>
            <person name="Hilson P."/>
        </authorList>
    </citation>
    <scope>NUCLEOTIDE SEQUENCE [LARGE SCALE MRNA]</scope>
    <source>
        <strain>cv. Columbia</strain>
    </source>
</reference>
<reference key="4">
    <citation type="journal article" date="2003" name="Plant Physiol.">
        <title>Identification of glycosylphosphatidylinositol-anchored proteins in Arabidopsis. A proteomic and genomic analysis.</title>
        <authorList>
            <person name="Borner G.H.H."/>
            <person name="Lilley K.S."/>
            <person name="Stevens T.J."/>
            <person name="Dupree P."/>
        </authorList>
    </citation>
    <scope>GENE FAMILY</scope>
    <source>
        <strain>cv. Columbia</strain>
    </source>
</reference>
<reference key="5">
    <citation type="journal article" date="2009" name="Biosci. Biotechnol. Biochem.">
        <title>Genome-wide identification, structure and expression studies, and mutant collection of 22 early nodulin-like protein genes in Arabidopsis.</title>
        <authorList>
            <person name="Mashiguchi K."/>
            <person name="Asami T."/>
            <person name="Suzuki Y."/>
        </authorList>
    </citation>
    <scope>TISSUE SPECIFICITY</scope>
    <scope>GENE FAMILY</scope>
    <scope>NOMENCLATURE</scope>
    <source>
        <strain>cv. Columbia</strain>
    </source>
</reference>
<reference key="6">
    <citation type="journal article" date="2014" name="Plant Cell Physiol.">
        <title>Emerging functions of nodulin-like proteins in non-nodulating plant species.</title>
        <authorList>
            <person name="Denance N."/>
            <person name="Szurek B."/>
            <person name="Noel L.D."/>
        </authorList>
    </citation>
    <scope>REVIEW ON NODULIN-LIKE PROTEINS</scope>
</reference>
<organism>
    <name type="scientific">Arabidopsis thaliana</name>
    <name type="common">Mouse-ear cress</name>
    <dbReference type="NCBI Taxonomy" id="3702"/>
    <lineage>
        <taxon>Eukaryota</taxon>
        <taxon>Viridiplantae</taxon>
        <taxon>Streptophyta</taxon>
        <taxon>Embryophyta</taxon>
        <taxon>Tracheophyta</taxon>
        <taxon>Spermatophyta</taxon>
        <taxon>Magnoliopsida</taxon>
        <taxon>eudicotyledons</taxon>
        <taxon>Gunneridae</taxon>
        <taxon>Pentapetalae</taxon>
        <taxon>rosids</taxon>
        <taxon>malvids</taxon>
        <taxon>Brassicales</taxon>
        <taxon>Brassicaceae</taxon>
        <taxon>Camelineae</taxon>
        <taxon>Arabidopsis</taxon>
    </lineage>
</organism>
<keyword id="KW-1003">Cell membrane</keyword>
<keyword id="KW-1015">Disulfide bond</keyword>
<keyword id="KW-0325">Glycoprotein</keyword>
<keyword id="KW-0336">GPI-anchor</keyword>
<keyword id="KW-0449">Lipoprotein</keyword>
<keyword id="KW-0472">Membrane</keyword>
<keyword id="KW-1185">Reference proteome</keyword>
<keyword id="KW-0732">Signal</keyword>
<name>ENL07_ARATH</name>
<proteinExistence type="evidence at transcript level"/>
<comment type="function">
    <text evidence="6">May act as a carbohydrate transporter.</text>
</comment>
<comment type="subcellular location">
    <subcellularLocation>
        <location evidence="1">Cell membrane</location>
        <topology evidence="1">Lipid-anchor</topology>
        <topology evidence="1">GPI-anchor</topology>
    </subcellularLocation>
</comment>
<comment type="tissue specificity">
    <text evidence="4">Mostly expressed in flowers, and, to a lower extent, in seeds, but barely in seedlings, stems, leaves and roots.</text>
</comment>
<comment type="similarity">
    <text evidence="7">Belongs to the early nodulin-like (ENODL) family.</text>
</comment>
<evidence type="ECO:0000255" key="1"/>
<evidence type="ECO:0000255" key="2">
    <source>
        <dbReference type="PROSITE-ProRule" id="PRU00498"/>
    </source>
</evidence>
<evidence type="ECO:0000255" key="3">
    <source>
        <dbReference type="PROSITE-ProRule" id="PRU00818"/>
    </source>
</evidence>
<evidence type="ECO:0000269" key="4">
    <source>
    </source>
</evidence>
<evidence type="ECO:0000303" key="5">
    <source>
    </source>
</evidence>
<evidence type="ECO:0000303" key="6">
    <source>
    </source>
</evidence>
<evidence type="ECO:0000305" key="7"/>
<evidence type="ECO:0000312" key="8">
    <source>
        <dbReference type="Araport" id="AT1G79800"/>
    </source>
</evidence>
<evidence type="ECO:0000312" key="9">
    <source>
        <dbReference type="EMBL" id="AAF68112.1"/>
    </source>
</evidence>
<evidence type="ECO:0000312" key="10">
    <source>
        <dbReference type="EMBL" id="AAG52257.1"/>
    </source>
</evidence>
<protein>
    <recommendedName>
        <fullName evidence="5">Early nodulin-like protein 7</fullName>
        <shortName evidence="5">AtENODL7</shortName>
    </recommendedName>
    <alternativeName>
        <fullName evidence="7">Phytocyanin-like protein ENODL7</fullName>
    </alternativeName>
</protein>
<sequence length="192" mass="21197">MMMMMMRSTCNLTLMLCICALVVASMAAEGPRDFKVGDEFGWRVPLQNDSAVYSHWASSNRFHIGDSLSFVYDKDSVMEVDKWGFYHCNGSDPITAFDNGNSTFDLDRPGLFYFISGSNQHCTSGQRLIVEVMHIHQHHDHDASMPPSMSPLSNSASPYASASASSAASSLPTACLLIPLFLTIASFRFISY</sequence>
<feature type="signal peptide" evidence="1">
    <location>
        <begin position="1"/>
        <end position="27"/>
    </location>
</feature>
<feature type="chain" id="PRO_5014313253" description="Early nodulin-like protein 7">
    <location>
        <begin position="28"/>
        <end position="166"/>
    </location>
</feature>
<feature type="propeptide" id="PRO_0000457738" description="Removed in mature form" evidence="1">
    <location>
        <begin position="167"/>
        <end position="192"/>
    </location>
</feature>
<feature type="domain" description="Phytocyanin" evidence="3">
    <location>
        <begin position="32"/>
        <end position="134"/>
    </location>
</feature>
<feature type="lipid moiety-binding region" description="GPI-anchor amidated serine" evidence="1">
    <location>
        <position position="166"/>
    </location>
</feature>
<feature type="glycosylation site" description="N-linked (GlcNAc...) asparagine" evidence="2">
    <location>
        <position position="48"/>
    </location>
</feature>
<feature type="glycosylation site" description="N-linked (GlcNAc...) asparagine" evidence="2">
    <location>
        <position position="89"/>
    </location>
</feature>
<feature type="glycosylation site" description="N-linked (GlcNAc...) asparagine" evidence="2">
    <location>
        <position position="101"/>
    </location>
</feature>
<feature type="disulfide bond" evidence="3">
    <location>
        <begin position="88"/>
        <end position="122"/>
    </location>
</feature>
<gene>
    <name evidence="5" type="primary">ENODL7</name>
    <name evidence="5" type="synonym">EN7</name>
    <name evidence="8" type="ordered locus">At1g79800</name>
    <name evidence="10" type="ORF">F19K16.24</name>
    <name evidence="9" type="ORF">F20B17.22</name>
</gene>